<evidence type="ECO:0000255" key="1">
    <source>
        <dbReference type="HAMAP-Rule" id="MF_00514"/>
    </source>
</evidence>
<evidence type="ECO:0000305" key="2"/>
<accession>Q48JS1</accession>
<protein>
    <recommendedName>
        <fullName evidence="1">Large ribosomal subunit protein bL35</fullName>
    </recommendedName>
    <alternativeName>
        <fullName evidence="2">50S ribosomal protein L35</fullName>
    </alternativeName>
</protein>
<proteinExistence type="inferred from homology"/>
<dbReference type="EMBL" id="CP000058">
    <property type="protein sequence ID" value="AAZ35321.1"/>
    <property type="molecule type" value="Genomic_DNA"/>
</dbReference>
<dbReference type="RefSeq" id="WP_002553160.1">
    <property type="nucleotide sequence ID" value="NC_005773.3"/>
</dbReference>
<dbReference type="SMR" id="Q48JS1"/>
<dbReference type="GeneID" id="98112259"/>
<dbReference type="KEGG" id="psp:PSPPH_2137"/>
<dbReference type="eggNOG" id="COG0291">
    <property type="taxonomic scope" value="Bacteria"/>
</dbReference>
<dbReference type="HOGENOM" id="CLU_169643_1_1_6"/>
<dbReference type="Proteomes" id="UP000000551">
    <property type="component" value="Chromosome"/>
</dbReference>
<dbReference type="GO" id="GO:0022625">
    <property type="term" value="C:cytosolic large ribosomal subunit"/>
    <property type="evidence" value="ECO:0007669"/>
    <property type="project" value="TreeGrafter"/>
</dbReference>
<dbReference type="GO" id="GO:0003735">
    <property type="term" value="F:structural constituent of ribosome"/>
    <property type="evidence" value="ECO:0007669"/>
    <property type="project" value="InterPro"/>
</dbReference>
<dbReference type="GO" id="GO:0006412">
    <property type="term" value="P:translation"/>
    <property type="evidence" value="ECO:0007669"/>
    <property type="project" value="UniProtKB-UniRule"/>
</dbReference>
<dbReference type="FunFam" id="4.10.410.60:FF:000001">
    <property type="entry name" value="50S ribosomal protein L35"/>
    <property type="match status" value="1"/>
</dbReference>
<dbReference type="Gene3D" id="4.10.410.60">
    <property type="match status" value="1"/>
</dbReference>
<dbReference type="HAMAP" id="MF_00514">
    <property type="entry name" value="Ribosomal_bL35"/>
    <property type="match status" value="1"/>
</dbReference>
<dbReference type="InterPro" id="IPR001706">
    <property type="entry name" value="Ribosomal_bL35"/>
</dbReference>
<dbReference type="InterPro" id="IPR021137">
    <property type="entry name" value="Ribosomal_bL35-like"/>
</dbReference>
<dbReference type="InterPro" id="IPR018265">
    <property type="entry name" value="Ribosomal_bL35_CS"/>
</dbReference>
<dbReference type="InterPro" id="IPR037229">
    <property type="entry name" value="Ribosomal_bL35_sf"/>
</dbReference>
<dbReference type="NCBIfam" id="TIGR00001">
    <property type="entry name" value="rpmI_bact"/>
    <property type="match status" value="1"/>
</dbReference>
<dbReference type="PANTHER" id="PTHR33343">
    <property type="entry name" value="54S RIBOSOMAL PROTEIN BL35M"/>
    <property type="match status" value="1"/>
</dbReference>
<dbReference type="PANTHER" id="PTHR33343:SF1">
    <property type="entry name" value="LARGE RIBOSOMAL SUBUNIT PROTEIN BL35M"/>
    <property type="match status" value="1"/>
</dbReference>
<dbReference type="Pfam" id="PF01632">
    <property type="entry name" value="Ribosomal_L35p"/>
    <property type="match status" value="1"/>
</dbReference>
<dbReference type="PRINTS" id="PR00064">
    <property type="entry name" value="RIBOSOMALL35"/>
</dbReference>
<dbReference type="SUPFAM" id="SSF143034">
    <property type="entry name" value="L35p-like"/>
    <property type="match status" value="1"/>
</dbReference>
<dbReference type="PROSITE" id="PS00936">
    <property type="entry name" value="RIBOSOMAL_L35"/>
    <property type="match status" value="1"/>
</dbReference>
<feature type="chain" id="PRO_0000258728" description="Large ribosomal subunit protein bL35">
    <location>
        <begin position="1"/>
        <end position="64"/>
    </location>
</feature>
<organism>
    <name type="scientific">Pseudomonas savastanoi pv. phaseolicola (strain 1448A / Race 6)</name>
    <name type="common">Pseudomonas syringae pv. phaseolicola (strain 1448A / Race 6)</name>
    <dbReference type="NCBI Taxonomy" id="264730"/>
    <lineage>
        <taxon>Bacteria</taxon>
        <taxon>Pseudomonadati</taxon>
        <taxon>Pseudomonadota</taxon>
        <taxon>Gammaproteobacteria</taxon>
        <taxon>Pseudomonadales</taxon>
        <taxon>Pseudomonadaceae</taxon>
        <taxon>Pseudomonas</taxon>
    </lineage>
</organism>
<comment type="similarity">
    <text evidence="1">Belongs to the bacterial ribosomal protein bL35 family.</text>
</comment>
<sequence>MPKMKTKSGAAKRFLKTANGIKHKHAFKSHILTKMSTKRKRQLRGSSLLHPSDVAKVERMLRLR</sequence>
<name>RL35_PSE14</name>
<reference key="1">
    <citation type="journal article" date="2005" name="J. Bacteriol.">
        <title>Whole-genome sequence analysis of Pseudomonas syringae pv. phaseolicola 1448A reveals divergence among pathovars in genes involved in virulence and transposition.</title>
        <authorList>
            <person name="Joardar V."/>
            <person name="Lindeberg M."/>
            <person name="Jackson R.W."/>
            <person name="Selengut J."/>
            <person name="Dodson R."/>
            <person name="Brinkac L.M."/>
            <person name="Daugherty S.C."/>
            <person name="DeBoy R.T."/>
            <person name="Durkin A.S."/>
            <person name="Gwinn Giglio M."/>
            <person name="Madupu R."/>
            <person name="Nelson W.C."/>
            <person name="Rosovitz M.J."/>
            <person name="Sullivan S.A."/>
            <person name="Crabtree J."/>
            <person name="Creasy T."/>
            <person name="Davidsen T.M."/>
            <person name="Haft D.H."/>
            <person name="Zafar N."/>
            <person name="Zhou L."/>
            <person name="Halpin R."/>
            <person name="Holley T."/>
            <person name="Khouri H.M."/>
            <person name="Feldblyum T.V."/>
            <person name="White O."/>
            <person name="Fraser C.M."/>
            <person name="Chatterjee A.K."/>
            <person name="Cartinhour S."/>
            <person name="Schneider D."/>
            <person name="Mansfield J.W."/>
            <person name="Collmer A."/>
            <person name="Buell R."/>
        </authorList>
    </citation>
    <scope>NUCLEOTIDE SEQUENCE [LARGE SCALE GENOMIC DNA]</scope>
    <source>
        <strain>1448A / Race 6</strain>
    </source>
</reference>
<keyword id="KW-0687">Ribonucleoprotein</keyword>
<keyword id="KW-0689">Ribosomal protein</keyword>
<gene>
    <name evidence="1" type="primary">rpmI</name>
    <name type="ordered locus">PSPPH_2137</name>
</gene>